<proteinExistence type="inferred from homology"/>
<keyword id="KW-0489">Methyltransferase</keyword>
<keyword id="KW-1185">Reference proteome</keyword>
<keyword id="KW-0949">S-adenosyl-L-methionine</keyword>
<keyword id="KW-0808">Transferase</keyword>
<keyword id="KW-0819">tRNA processing</keyword>
<reference key="1">
    <citation type="submission" date="2005-08" db="EMBL/GenBank/DDBJ databases">
        <title>Complete sequence of Synechococcus sp. CC9902.</title>
        <authorList>
            <person name="Copeland A."/>
            <person name="Lucas S."/>
            <person name="Lapidus A."/>
            <person name="Barry K."/>
            <person name="Detter J.C."/>
            <person name="Glavina T."/>
            <person name="Hammon N."/>
            <person name="Israni S."/>
            <person name="Pitluck S."/>
            <person name="Martinez M."/>
            <person name="Schmutz J."/>
            <person name="Larimer F."/>
            <person name="Land M."/>
            <person name="Kyrpides N."/>
            <person name="Ivanova N."/>
            <person name="Richardson P."/>
        </authorList>
    </citation>
    <scope>NUCLEOTIDE SEQUENCE [LARGE SCALE GENOMIC DNA]</scope>
    <source>
        <strain>CC9902</strain>
    </source>
</reference>
<accession>Q3AW35</accession>
<dbReference type="EC" id="2.1.1.33" evidence="2"/>
<dbReference type="EMBL" id="CP000097">
    <property type="protein sequence ID" value="ABB27022.1"/>
    <property type="molecule type" value="Genomic_DNA"/>
</dbReference>
<dbReference type="RefSeq" id="WP_011360809.1">
    <property type="nucleotide sequence ID" value="NC_007513.1"/>
</dbReference>
<dbReference type="SMR" id="Q3AW35"/>
<dbReference type="STRING" id="316279.Syncc9902_2064"/>
<dbReference type="KEGG" id="sye:Syncc9902_2064"/>
<dbReference type="eggNOG" id="COG0220">
    <property type="taxonomic scope" value="Bacteria"/>
</dbReference>
<dbReference type="HOGENOM" id="CLU_050910_1_3_3"/>
<dbReference type="OrthoDB" id="9802090at2"/>
<dbReference type="UniPathway" id="UPA00989"/>
<dbReference type="Proteomes" id="UP000002712">
    <property type="component" value="Chromosome"/>
</dbReference>
<dbReference type="GO" id="GO:0043527">
    <property type="term" value="C:tRNA methyltransferase complex"/>
    <property type="evidence" value="ECO:0007669"/>
    <property type="project" value="TreeGrafter"/>
</dbReference>
<dbReference type="GO" id="GO:0008176">
    <property type="term" value="F:tRNA (guanine(46)-N7)-methyltransferase activity"/>
    <property type="evidence" value="ECO:0007669"/>
    <property type="project" value="UniProtKB-UniRule"/>
</dbReference>
<dbReference type="CDD" id="cd02440">
    <property type="entry name" value="AdoMet_MTases"/>
    <property type="match status" value="1"/>
</dbReference>
<dbReference type="Gene3D" id="3.40.50.150">
    <property type="entry name" value="Vaccinia Virus protein VP39"/>
    <property type="match status" value="1"/>
</dbReference>
<dbReference type="HAMAP" id="MF_01057">
    <property type="entry name" value="tRNA_methyltr_TrmB"/>
    <property type="match status" value="1"/>
</dbReference>
<dbReference type="InterPro" id="IPR029063">
    <property type="entry name" value="SAM-dependent_MTases_sf"/>
</dbReference>
<dbReference type="InterPro" id="IPR003358">
    <property type="entry name" value="tRNA_(Gua-N-7)_MeTrfase_Trmb"/>
</dbReference>
<dbReference type="InterPro" id="IPR055361">
    <property type="entry name" value="tRNA_methyltr_TrmB_bact"/>
</dbReference>
<dbReference type="NCBIfam" id="TIGR00091">
    <property type="entry name" value="tRNA (guanosine(46)-N7)-methyltransferase TrmB"/>
    <property type="match status" value="1"/>
</dbReference>
<dbReference type="PANTHER" id="PTHR23417">
    <property type="entry name" value="3-DEOXY-D-MANNO-OCTULOSONIC-ACID TRANSFERASE/TRNA GUANINE-N 7 - -METHYLTRANSFERASE"/>
    <property type="match status" value="1"/>
</dbReference>
<dbReference type="PANTHER" id="PTHR23417:SF21">
    <property type="entry name" value="TRNA (GUANINE-N(7)-)-METHYLTRANSFERASE"/>
    <property type="match status" value="1"/>
</dbReference>
<dbReference type="Pfam" id="PF02390">
    <property type="entry name" value="Methyltransf_4"/>
    <property type="match status" value="1"/>
</dbReference>
<dbReference type="SUPFAM" id="SSF53335">
    <property type="entry name" value="S-adenosyl-L-methionine-dependent methyltransferases"/>
    <property type="match status" value="1"/>
</dbReference>
<dbReference type="PROSITE" id="PS51625">
    <property type="entry name" value="SAM_MT_TRMB"/>
    <property type="match status" value="1"/>
</dbReference>
<gene>
    <name evidence="2" type="primary">trmB</name>
    <name type="ordered locus">Syncc9902_2064</name>
</gene>
<evidence type="ECO:0000250" key="1"/>
<evidence type="ECO:0000255" key="2">
    <source>
        <dbReference type="HAMAP-Rule" id="MF_01057"/>
    </source>
</evidence>
<evidence type="ECO:0000256" key="3">
    <source>
        <dbReference type="SAM" id="MobiDB-lite"/>
    </source>
</evidence>
<comment type="function">
    <text evidence="2">Catalyzes the formation of N(7)-methylguanine at position 46 (m7G46) in tRNA.</text>
</comment>
<comment type="catalytic activity">
    <reaction evidence="2">
        <text>guanosine(46) in tRNA + S-adenosyl-L-methionine = N(7)-methylguanosine(46) in tRNA + S-adenosyl-L-homocysteine</text>
        <dbReference type="Rhea" id="RHEA:42708"/>
        <dbReference type="Rhea" id="RHEA-COMP:10188"/>
        <dbReference type="Rhea" id="RHEA-COMP:10189"/>
        <dbReference type="ChEBI" id="CHEBI:57856"/>
        <dbReference type="ChEBI" id="CHEBI:59789"/>
        <dbReference type="ChEBI" id="CHEBI:74269"/>
        <dbReference type="ChEBI" id="CHEBI:74480"/>
        <dbReference type="EC" id="2.1.1.33"/>
    </reaction>
</comment>
<comment type="pathway">
    <text evidence="2">tRNA modification; N(7)-methylguanine-tRNA biosynthesis.</text>
</comment>
<comment type="similarity">
    <text evidence="2">Belongs to the class I-like SAM-binding methyltransferase superfamily. TrmB family.</text>
</comment>
<sequence length="236" mass="27647">MRQHVNPLSRSFQLPLRLPPPSELFTHPEHPIHLDIGCARGRCILDLADRHPNWNHIGVEIRRPLVIPADREALESPHGNVRVLFCNANISLEGWMETLPKDRLQRVSIQFPDPWFKRRHRKRRVLQPRLLMAIASALQPGKDFFIQSDVREVIDPMVALTELSGCFDRPENDAHPWRRTNPLTVPTERERYVMDQQLPVYRVLFRRNHTHQPPIEEFEQHWQEIDNPGNAPTPDA</sequence>
<organism>
    <name type="scientific">Synechococcus sp. (strain CC9902)</name>
    <dbReference type="NCBI Taxonomy" id="316279"/>
    <lineage>
        <taxon>Bacteria</taxon>
        <taxon>Bacillati</taxon>
        <taxon>Cyanobacteriota</taxon>
        <taxon>Cyanophyceae</taxon>
        <taxon>Synechococcales</taxon>
        <taxon>Synechococcaceae</taxon>
        <taxon>Synechococcus</taxon>
    </lineage>
</organism>
<name>TRMB_SYNS9</name>
<feature type="chain" id="PRO_0000288244" description="tRNA (guanine-N(7)-)-methyltransferase">
    <location>
        <begin position="1"/>
        <end position="236"/>
    </location>
</feature>
<feature type="region of interest" description="Disordered" evidence="3">
    <location>
        <begin position="217"/>
        <end position="236"/>
    </location>
</feature>
<feature type="active site" evidence="1">
    <location>
        <position position="113"/>
    </location>
</feature>
<feature type="binding site" evidence="2">
    <location>
        <position position="35"/>
    </location>
    <ligand>
        <name>S-adenosyl-L-methionine</name>
        <dbReference type="ChEBI" id="CHEBI:59789"/>
    </ligand>
</feature>
<feature type="binding site" evidence="2">
    <location>
        <position position="60"/>
    </location>
    <ligand>
        <name>S-adenosyl-L-methionine</name>
        <dbReference type="ChEBI" id="CHEBI:59789"/>
    </ligand>
</feature>
<feature type="binding site" evidence="2">
    <location>
        <position position="87"/>
    </location>
    <ligand>
        <name>S-adenosyl-L-methionine</name>
        <dbReference type="ChEBI" id="CHEBI:59789"/>
    </ligand>
</feature>
<feature type="binding site" evidence="2">
    <location>
        <position position="113"/>
    </location>
    <ligand>
        <name>S-adenosyl-L-methionine</name>
        <dbReference type="ChEBI" id="CHEBI:59789"/>
    </ligand>
</feature>
<feature type="binding site" evidence="2">
    <location>
        <position position="117"/>
    </location>
    <ligand>
        <name>substrate</name>
    </ligand>
</feature>
<feature type="binding site" evidence="2">
    <location>
        <position position="149"/>
    </location>
    <ligand>
        <name>substrate</name>
    </ligand>
</feature>
<protein>
    <recommendedName>
        <fullName evidence="2">tRNA (guanine-N(7)-)-methyltransferase</fullName>
        <ecNumber evidence="2">2.1.1.33</ecNumber>
    </recommendedName>
    <alternativeName>
        <fullName evidence="2">tRNA (guanine(46)-N(7))-methyltransferase</fullName>
    </alternativeName>
    <alternativeName>
        <fullName evidence="2">tRNA(m7G46)-methyltransferase</fullName>
    </alternativeName>
</protein>